<dbReference type="EC" id="2.7.7.6" evidence="1"/>
<dbReference type="EMBL" id="CR628337">
    <property type="protein sequence ID" value="CAH16226.1"/>
    <property type="molecule type" value="Genomic_DNA"/>
</dbReference>
<dbReference type="RefSeq" id="WP_011214258.1">
    <property type="nucleotide sequence ID" value="NC_006369.1"/>
</dbReference>
<dbReference type="SMR" id="Q5WV31"/>
<dbReference type="GeneID" id="57036003"/>
<dbReference type="KEGG" id="lpf:lpl1986"/>
<dbReference type="LegioList" id="lpl1986"/>
<dbReference type="HOGENOM" id="CLU_125406_5_2_6"/>
<dbReference type="Proteomes" id="UP000002517">
    <property type="component" value="Chromosome"/>
</dbReference>
<dbReference type="GO" id="GO:0000428">
    <property type="term" value="C:DNA-directed RNA polymerase complex"/>
    <property type="evidence" value="ECO:0007669"/>
    <property type="project" value="UniProtKB-KW"/>
</dbReference>
<dbReference type="GO" id="GO:0003677">
    <property type="term" value="F:DNA binding"/>
    <property type="evidence" value="ECO:0007669"/>
    <property type="project" value="UniProtKB-UniRule"/>
</dbReference>
<dbReference type="GO" id="GO:0003899">
    <property type="term" value="F:DNA-directed RNA polymerase activity"/>
    <property type="evidence" value="ECO:0007669"/>
    <property type="project" value="UniProtKB-UniRule"/>
</dbReference>
<dbReference type="GO" id="GO:0006351">
    <property type="term" value="P:DNA-templated transcription"/>
    <property type="evidence" value="ECO:0007669"/>
    <property type="project" value="UniProtKB-UniRule"/>
</dbReference>
<dbReference type="Gene3D" id="3.90.940.10">
    <property type="match status" value="1"/>
</dbReference>
<dbReference type="HAMAP" id="MF_00366">
    <property type="entry name" value="RNApol_bact_RpoZ"/>
    <property type="match status" value="1"/>
</dbReference>
<dbReference type="InterPro" id="IPR003716">
    <property type="entry name" value="DNA-dir_RNA_pol_omega"/>
</dbReference>
<dbReference type="InterPro" id="IPR006110">
    <property type="entry name" value="Pol_omega/Rpo6/RPB6"/>
</dbReference>
<dbReference type="InterPro" id="IPR036161">
    <property type="entry name" value="RPB6/omega-like_sf"/>
</dbReference>
<dbReference type="NCBIfam" id="TIGR00690">
    <property type="entry name" value="rpoZ"/>
    <property type="match status" value="1"/>
</dbReference>
<dbReference type="PANTHER" id="PTHR34476">
    <property type="entry name" value="DNA-DIRECTED RNA POLYMERASE SUBUNIT OMEGA"/>
    <property type="match status" value="1"/>
</dbReference>
<dbReference type="PANTHER" id="PTHR34476:SF1">
    <property type="entry name" value="DNA-DIRECTED RNA POLYMERASE SUBUNIT OMEGA"/>
    <property type="match status" value="1"/>
</dbReference>
<dbReference type="Pfam" id="PF01192">
    <property type="entry name" value="RNA_pol_Rpb6"/>
    <property type="match status" value="1"/>
</dbReference>
<dbReference type="SMART" id="SM01409">
    <property type="entry name" value="RNA_pol_Rpb6"/>
    <property type="match status" value="1"/>
</dbReference>
<dbReference type="SUPFAM" id="SSF63562">
    <property type="entry name" value="RPB6/omega subunit-like"/>
    <property type="match status" value="1"/>
</dbReference>
<accession>Q5WV31</accession>
<sequence length="67" mass="7672">MARVTVEDCLEHVKNRFELVMVATKRARQIAVRGDQPMVEWENDKPTVVALREIAEGYVTADILDED</sequence>
<feature type="chain" id="PRO_0000237470" description="DNA-directed RNA polymerase subunit omega">
    <location>
        <begin position="1"/>
        <end position="67"/>
    </location>
</feature>
<organism>
    <name type="scientific">Legionella pneumophila (strain Lens)</name>
    <dbReference type="NCBI Taxonomy" id="297245"/>
    <lineage>
        <taxon>Bacteria</taxon>
        <taxon>Pseudomonadati</taxon>
        <taxon>Pseudomonadota</taxon>
        <taxon>Gammaproteobacteria</taxon>
        <taxon>Legionellales</taxon>
        <taxon>Legionellaceae</taxon>
        <taxon>Legionella</taxon>
    </lineage>
</organism>
<name>RPOZ_LEGPL</name>
<evidence type="ECO:0000255" key="1">
    <source>
        <dbReference type="HAMAP-Rule" id="MF_00366"/>
    </source>
</evidence>
<reference key="1">
    <citation type="journal article" date="2004" name="Nat. Genet.">
        <title>Evidence in the Legionella pneumophila genome for exploitation of host cell functions and high genome plasticity.</title>
        <authorList>
            <person name="Cazalet C."/>
            <person name="Rusniok C."/>
            <person name="Brueggemann H."/>
            <person name="Zidane N."/>
            <person name="Magnier A."/>
            <person name="Ma L."/>
            <person name="Tichit M."/>
            <person name="Jarraud S."/>
            <person name="Bouchier C."/>
            <person name="Vandenesch F."/>
            <person name="Kunst F."/>
            <person name="Etienne J."/>
            <person name="Glaser P."/>
            <person name="Buchrieser C."/>
        </authorList>
    </citation>
    <scope>NUCLEOTIDE SEQUENCE [LARGE SCALE GENOMIC DNA]</scope>
    <source>
        <strain>Lens</strain>
    </source>
</reference>
<protein>
    <recommendedName>
        <fullName evidence="1">DNA-directed RNA polymerase subunit omega</fullName>
        <shortName evidence="1">RNAP omega subunit</shortName>
        <ecNumber evidence="1">2.7.7.6</ecNumber>
    </recommendedName>
    <alternativeName>
        <fullName evidence="1">RNA polymerase omega subunit</fullName>
    </alternativeName>
    <alternativeName>
        <fullName evidence="1">Transcriptase subunit omega</fullName>
    </alternativeName>
</protein>
<gene>
    <name evidence="1" type="primary">rpoZ</name>
    <name type="ordered locus">lpl1986</name>
</gene>
<proteinExistence type="inferred from homology"/>
<keyword id="KW-0240">DNA-directed RNA polymerase</keyword>
<keyword id="KW-0548">Nucleotidyltransferase</keyword>
<keyword id="KW-0804">Transcription</keyword>
<keyword id="KW-0808">Transferase</keyword>
<comment type="function">
    <text evidence="1">Promotes RNA polymerase assembly. Latches the N- and C-terminal regions of the beta' subunit thereby facilitating its interaction with the beta and alpha subunits.</text>
</comment>
<comment type="catalytic activity">
    <reaction evidence="1">
        <text>RNA(n) + a ribonucleoside 5'-triphosphate = RNA(n+1) + diphosphate</text>
        <dbReference type="Rhea" id="RHEA:21248"/>
        <dbReference type="Rhea" id="RHEA-COMP:14527"/>
        <dbReference type="Rhea" id="RHEA-COMP:17342"/>
        <dbReference type="ChEBI" id="CHEBI:33019"/>
        <dbReference type="ChEBI" id="CHEBI:61557"/>
        <dbReference type="ChEBI" id="CHEBI:140395"/>
        <dbReference type="EC" id="2.7.7.6"/>
    </reaction>
</comment>
<comment type="subunit">
    <text evidence="1">The RNAP catalytic core consists of 2 alpha, 1 beta, 1 beta' and 1 omega subunit. When a sigma factor is associated with the core the holoenzyme is formed, which can initiate transcription.</text>
</comment>
<comment type="similarity">
    <text evidence="1">Belongs to the RNA polymerase subunit omega family.</text>
</comment>